<proteinExistence type="evidence at protein level"/>
<feature type="initiator methionine" description="Removed" evidence="7">
    <location>
        <position position="1"/>
    </location>
</feature>
<feature type="chain" id="PRO_0000180031" description="GTPase Era">
    <location>
        <begin position="2"/>
        <end position="300"/>
    </location>
</feature>
<feature type="domain" description="Era-type G" evidence="2">
    <location>
        <begin position="5"/>
        <end position="176"/>
    </location>
</feature>
<feature type="domain" description="KH type-2" evidence="1">
    <location>
        <begin position="207"/>
        <end position="286"/>
    </location>
</feature>
<feature type="region of interest" description="G1" evidence="2">
    <location>
        <begin position="13"/>
        <end position="20"/>
    </location>
</feature>
<feature type="region of interest" description="G2" evidence="2">
    <location>
        <begin position="39"/>
        <end position="43"/>
    </location>
</feature>
<feature type="region of interest" description="G3" evidence="2">
    <location>
        <begin position="60"/>
        <end position="63"/>
    </location>
</feature>
<feature type="region of interest" description="G4" evidence="2">
    <location>
        <begin position="125"/>
        <end position="128"/>
    </location>
</feature>
<feature type="region of interest" description="G5" evidence="2">
    <location>
        <begin position="155"/>
        <end position="157"/>
    </location>
</feature>
<feature type="binding site" evidence="1">
    <location>
        <begin position="13"/>
        <end position="20"/>
    </location>
    <ligand>
        <name>GTP</name>
        <dbReference type="ChEBI" id="CHEBI:37565"/>
    </ligand>
</feature>
<feature type="binding site" evidence="1">
    <location>
        <begin position="60"/>
        <end position="64"/>
    </location>
    <ligand>
        <name>GTP</name>
        <dbReference type="ChEBI" id="CHEBI:37565"/>
    </ligand>
</feature>
<feature type="binding site" evidence="1">
    <location>
        <begin position="125"/>
        <end position="128"/>
    </location>
    <ligand>
        <name>GTP</name>
        <dbReference type="ChEBI" id="CHEBI:37565"/>
    </ligand>
</feature>
<feature type="modified residue" description="N-acetylthreonine" evidence="7">
    <location>
        <position position="2"/>
    </location>
</feature>
<feature type="mutagenesis site" description="No GTPase activity." evidence="4">
    <original>D</original>
    <variation>A</variation>
    <location>
        <position position="87"/>
    </location>
</feature>
<comment type="function">
    <text evidence="1 4">Exhibits GTPase activity (PubMed:22578863). Binds RNA but is probably not involved in ribosome assembly in mycobacteria (By similarity).</text>
</comment>
<comment type="subunit">
    <text evidence="1">Monomer.</text>
</comment>
<comment type="subcellular location">
    <subcellularLocation>
        <location evidence="1">Cell envelope</location>
    </subcellularLocation>
    <subcellularLocation>
        <location evidence="1">Secreted</location>
        <location evidence="1">Cell wall</location>
    </subcellularLocation>
</comment>
<comment type="induction">
    <text evidence="3">The mRNA can be cleaved by the RV1102c mRNA interferase in E.coli.</text>
</comment>
<comment type="similarity">
    <text evidence="1">Belongs to the TRAFAC class TrmE-Era-EngA-EngB-Septin-like GTPase superfamily. Era GTPase family.</text>
</comment>
<name>ERA_MYCTU</name>
<reference key="1">
    <citation type="journal article" date="1998" name="Nature">
        <title>Deciphering the biology of Mycobacterium tuberculosis from the complete genome sequence.</title>
        <authorList>
            <person name="Cole S.T."/>
            <person name="Brosch R."/>
            <person name="Parkhill J."/>
            <person name="Garnier T."/>
            <person name="Churcher C.M."/>
            <person name="Harris D.E."/>
            <person name="Gordon S.V."/>
            <person name="Eiglmeier K."/>
            <person name="Gas S."/>
            <person name="Barry C.E. III"/>
            <person name="Tekaia F."/>
            <person name="Badcock K."/>
            <person name="Basham D."/>
            <person name="Brown D."/>
            <person name="Chillingworth T."/>
            <person name="Connor R."/>
            <person name="Davies R.M."/>
            <person name="Devlin K."/>
            <person name="Feltwell T."/>
            <person name="Gentles S."/>
            <person name="Hamlin N."/>
            <person name="Holroyd S."/>
            <person name="Hornsby T."/>
            <person name="Jagels K."/>
            <person name="Krogh A."/>
            <person name="McLean J."/>
            <person name="Moule S."/>
            <person name="Murphy L.D."/>
            <person name="Oliver S."/>
            <person name="Osborne J."/>
            <person name="Quail M.A."/>
            <person name="Rajandream M.A."/>
            <person name="Rogers J."/>
            <person name="Rutter S."/>
            <person name="Seeger K."/>
            <person name="Skelton S."/>
            <person name="Squares S."/>
            <person name="Squares R."/>
            <person name="Sulston J.E."/>
            <person name="Taylor K."/>
            <person name="Whitehead S."/>
            <person name="Barrell B.G."/>
        </authorList>
    </citation>
    <scope>NUCLEOTIDE SEQUENCE [LARGE SCALE GENOMIC DNA]</scope>
    <source>
        <strain>ATCC 25618 / H37Rv</strain>
    </source>
</reference>
<reference key="2">
    <citation type="journal article" date="2008" name="Enzyme Microb. Technol.">
        <title>Cloning and characterization of GTP-binding proteins of Mycobacterium tuberculosis H37Rv.</title>
        <authorList>
            <person name="Meena L.S."/>
            <person name="Chopra P."/>
            <person name="Bedwal R.S."/>
            <person name="Singh Y."/>
        </authorList>
    </citation>
    <scope>FUNCTION AS A GTPASE</scope>
    <scope>GTP-BINDING</scope>
    <scope>MUTAGENESIS OF ASP-87</scope>
    <source>
        <strain>H37Rv</strain>
    </source>
</reference>
<reference key="3">
    <citation type="journal article" date="2010" name="Biochem. Biophys. Res. Commun.">
        <title>Characterization of a chromosomal toxin-antitoxin, Rv1102c-Rv1103c system in Mycobacterium tuberculosis.</title>
        <authorList>
            <person name="Han J.S."/>
            <person name="Lee J.J."/>
            <person name="Anandan T."/>
            <person name="Zeng M."/>
            <person name="Sripathi S."/>
            <person name="Jahng W.J."/>
            <person name="Lee S.H."/>
            <person name="Suh J.W."/>
            <person name="Kang C.M."/>
        </authorList>
    </citation>
    <scope>INDUCTION</scope>
    <source>
        <strain>ATCC 25618 / H37Rv</strain>
    </source>
</reference>
<reference key="4">
    <citation type="journal article" date="2011" name="Mol. Cell. Proteomics">
        <title>Proteogenomic analysis of Mycobacterium tuberculosis by high resolution mass spectrometry.</title>
        <authorList>
            <person name="Kelkar D.S."/>
            <person name="Kumar D."/>
            <person name="Kumar P."/>
            <person name="Balakrishnan L."/>
            <person name="Muthusamy B."/>
            <person name="Yadav A.K."/>
            <person name="Shrivastava P."/>
            <person name="Marimuthu A."/>
            <person name="Anand S."/>
            <person name="Sundaram H."/>
            <person name="Kingsbury R."/>
            <person name="Harsha H.C."/>
            <person name="Nair B."/>
            <person name="Prasad T.S."/>
            <person name="Chauhan D.S."/>
            <person name="Katoch K."/>
            <person name="Katoch V.M."/>
            <person name="Kumar P."/>
            <person name="Chaerkady R."/>
            <person name="Ramachandran S."/>
            <person name="Dash D."/>
            <person name="Pandey A."/>
        </authorList>
    </citation>
    <scope>ACETYLATION [LARGE SCALE ANALYSIS] AT THR-2</scope>
    <scope>CLEAVAGE OF INITIATOR METHIONINE [LARGE SCALE ANALYSIS]</scope>
    <scope>IDENTIFICATION BY MASS SPECTROMETRY [LARGE SCALE ANALYSIS]</scope>
    <source>
        <strain>ATCC 25618 / H37Rv</strain>
    </source>
</reference>
<evidence type="ECO:0000255" key="1">
    <source>
        <dbReference type="HAMAP-Rule" id="MF_00367"/>
    </source>
</evidence>
<evidence type="ECO:0000255" key="2">
    <source>
        <dbReference type="PROSITE-ProRule" id="PRU01050"/>
    </source>
</evidence>
<evidence type="ECO:0000269" key="3">
    <source>
    </source>
</evidence>
<evidence type="ECO:0000269" key="4">
    <source>
    </source>
</evidence>
<evidence type="ECO:0000303" key="5">
    <source>
    </source>
</evidence>
<evidence type="ECO:0000305" key="6"/>
<evidence type="ECO:0007744" key="7">
    <source>
    </source>
</evidence>
<keyword id="KW-0007">Acetylation</keyword>
<keyword id="KW-0134">Cell wall</keyword>
<keyword id="KW-0342">GTP-binding</keyword>
<keyword id="KW-0547">Nucleotide-binding</keyword>
<keyword id="KW-1185">Reference proteome</keyword>
<keyword id="KW-0694">RNA-binding</keyword>
<keyword id="KW-0964">Secreted</keyword>
<dbReference type="EMBL" id="AL123456">
    <property type="protein sequence ID" value="CCP45152.1"/>
    <property type="molecule type" value="Genomic_DNA"/>
</dbReference>
<dbReference type="PIR" id="C70586">
    <property type="entry name" value="C70586"/>
</dbReference>
<dbReference type="RefSeq" id="WP_003412224.1">
    <property type="nucleotide sequence ID" value="NZ_NVQJ01000029.1"/>
</dbReference>
<dbReference type="RefSeq" id="YP_177873.1">
    <property type="nucleotide sequence ID" value="NC_000962.3"/>
</dbReference>
<dbReference type="SMR" id="P9WNK9"/>
<dbReference type="FunCoup" id="P9WNK9">
    <property type="interactions" value="427"/>
</dbReference>
<dbReference type="STRING" id="83332.Rv2364c"/>
<dbReference type="iPTMnet" id="P9WNK9"/>
<dbReference type="PaxDb" id="83332-Rv2364c"/>
<dbReference type="DNASU" id="886027"/>
<dbReference type="GeneID" id="45426351"/>
<dbReference type="GeneID" id="886027"/>
<dbReference type="KEGG" id="mtu:Rv2364c"/>
<dbReference type="KEGG" id="mtv:RVBD_2364c"/>
<dbReference type="TubercuList" id="Rv2364c"/>
<dbReference type="eggNOG" id="COG1159">
    <property type="taxonomic scope" value="Bacteria"/>
</dbReference>
<dbReference type="InParanoid" id="P9WNK9"/>
<dbReference type="OrthoDB" id="9805918at2"/>
<dbReference type="PhylomeDB" id="P9WNK9"/>
<dbReference type="Proteomes" id="UP000001584">
    <property type="component" value="Chromosome"/>
</dbReference>
<dbReference type="GO" id="GO:0030313">
    <property type="term" value="C:cell envelope"/>
    <property type="evidence" value="ECO:0007669"/>
    <property type="project" value="UniProtKB-SubCell"/>
</dbReference>
<dbReference type="GO" id="GO:0005829">
    <property type="term" value="C:cytosol"/>
    <property type="evidence" value="ECO:0007005"/>
    <property type="project" value="MTBBASE"/>
</dbReference>
<dbReference type="GO" id="GO:0005576">
    <property type="term" value="C:extracellular region"/>
    <property type="evidence" value="ECO:0007669"/>
    <property type="project" value="UniProtKB-KW"/>
</dbReference>
<dbReference type="GO" id="GO:0005525">
    <property type="term" value="F:GTP binding"/>
    <property type="evidence" value="ECO:0007669"/>
    <property type="project" value="UniProtKB-UniRule"/>
</dbReference>
<dbReference type="GO" id="GO:0003924">
    <property type="term" value="F:GTPase activity"/>
    <property type="evidence" value="ECO:0007669"/>
    <property type="project" value="UniProtKB-UniRule"/>
</dbReference>
<dbReference type="GO" id="GO:0043024">
    <property type="term" value="F:ribosomal small subunit binding"/>
    <property type="evidence" value="ECO:0000318"/>
    <property type="project" value="GO_Central"/>
</dbReference>
<dbReference type="GO" id="GO:0019843">
    <property type="term" value="F:rRNA binding"/>
    <property type="evidence" value="ECO:0000318"/>
    <property type="project" value="GO_Central"/>
</dbReference>
<dbReference type="GO" id="GO:0000028">
    <property type="term" value="P:ribosomal small subunit assembly"/>
    <property type="evidence" value="ECO:0000318"/>
    <property type="project" value="GO_Central"/>
</dbReference>
<dbReference type="CDD" id="cd04163">
    <property type="entry name" value="Era"/>
    <property type="match status" value="1"/>
</dbReference>
<dbReference type="CDD" id="cd22534">
    <property type="entry name" value="KH-II_Era"/>
    <property type="match status" value="1"/>
</dbReference>
<dbReference type="FunFam" id="3.30.300.20:FF:000003">
    <property type="entry name" value="GTPase Era"/>
    <property type="match status" value="1"/>
</dbReference>
<dbReference type="FunFam" id="3.40.50.300:FF:000094">
    <property type="entry name" value="GTPase Era"/>
    <property type="match status" value="1"/>
</dbReference>
<dbReference type="Gene3D" id="3.30.300.20">
    <property type="match status" value="1"/>
</dbReference>
<dbReference type="Gene3D" id="3.40.50.300">
    <property type="entry name" value="P-loop containing nucleotide triphosphate hydrolases"/>
    <property type="match status" value="1"/>
</dbReference>
<dbReference type="HAMAP" id="MF_00367">
    <property type="entry name" value="GTPase_Era"/>
    <property type="match status" value="1"/>
</dbReference>
<dbReference type="InterPro" id="IPR030388">
    <property type="entry name" value="G_ERA_dom"/>
</dbReference>
<dbReference type="InterPro" id="IPR006073">
    <property type="entry name" value="GTP-bd"/>
</dbReference>
<dbReference type="InterPro" id="IPR005662">
    <property type="entry name" value="GTPase_Era-like"/>
</dbReference>
<dbReference type="InterPro" id="IPR015946">
    <property type="entry name" value="KH_dom-like_a/b"/>
</dbReference>
<dbReference type="InterPro" id="IPR004044">
    <property type="entry name" value="KH_dom_type_2"/>
</dbReference>
<dbReference type="InterPro" id="IPR009019">
    <property type="entry name" value="KH_sf_prok-type"/>
</dbReference>
<dbReference type="InterPro" id="IPR027417">
    <property type="entry name" value="P-loop_NTPase"/>
</dbReference>
<dbReference type="InterPro" id="IPR005225">
    <property type="entry name" value="Small_GTP-bd"/>
</dbReference>
<dbReference type="NCBIfam" id="TIGR00436">
    <property type="entry name" value="era"/>
    <property type="match status" value="1"/>
</dbReference>
<dbReference type="NCBIfam" id="NF000908">
    <property type="entry name" value="PRK00089.1"/>
    <property type="match status" value="1"/>
</dbReference>
<dbReference type="NCBIfam" id="TIGR00231">
    <property type="entry name" value="small_GTP"/>
    <property type="match status" value="1"/>
</dbReference>
<dbReference type="PANTHER" id="PTHR42698">
    <property type="entry name" value="GTPASE ERA"/>
    <property type="match status" value="1"/>
</dbReference>
<dbReference type="PANTHER" id="PTHR42698:SF1">
    <property type="entry name" value="GTPASE ERA, MITOCHONDRIAL"/>
    <property type="match status" value="1"/>
</dbReference>
<dbReference type="Pfam" id="PF07650">
    <property type="entry name" value="KH_2"/>
    <property type="match status" value="1"/>
</dbReference>
<dbReference type="Pfam" id="PF01926">
    <property type="entry name" value="MMR_HSR1"/>
    <property type="match status" value="1"/>
</dbReference>
<dbReference type="PRINTS" id="PR00326">
    <property type="entry name" value="GTP1OBG"/>
</dbReference>
<dbReference type="SUPFAM" id="SSF52540">
    <property type="entry name" value="P-loop containing nucleoside triphosphate hydrolases"/>
    <property type="match status" value="1"/>
</dbReference>
<dbReference type="SUPFAM" id="SSF54814">
    <property type="entry name" value="Prokaryotic type KH domain (KH-domain type II)"/>
    <property type="match status" value="1"/>
</dbReference>
<dbReference type="PROSITE" id="PS51713">
    <property type="entry name" value="G_ERA"/>
    <property type="match status" value="1"/>
</dbReference>
<dbReference type="PROSITE" id="PS50823">
    <property type="entry name" value="KH_TYPE_2"/>
    <property type="match status" value="1"/>
</dbReference>
<protein>
    <recommendedName>
        <fullName evidence="1 6">GTPase Era</fullName>
    </recommendedName>
</protein>
<sequence>MTEFHSGFVCLVGRPNTGKSTLTNALVGAKVAITSTRPQTTRHAIRGIVHSDDFQIILVDTPGLHRPRTLLGKRLNDLVRETYAAVDVIGLCIPADEAIGPGDRWIVEQLRSTGPANTTLVVIVTKIDKVPKEKVVAQLVAVSELVTNAAEIVPVSAMTGDRVDLLIDVLAAALPAGPAYYPDGELTDEPEEVLMAELIREAALQGVRDELPHSLAVVIDEVSPREGRDDLIDVHAALYVERDSQKGIVIGKGGARLREVGTAARSQIENLLGTKVYLDLRVKVAKNWQRDPKQLGRLGF</sequence>
<organism>
    <name type="scientific">Mycobacterium tuberculosis (strain ATCC 25618 / H37Rv)</name>
    <dbReference type="NCBI Taxonomy" id="83332"/>
    <lineage>
        <taxon>Bacteria</taxon>
        <taxon>Bacillati</taxon>
        <taxon>Actinomycetota</taxon>
        <taxon>Actinomycetes</taxon>
        <taxon>Mycobacteriales</taxon>
        <taxon>Mycobacteriaceae</taxon>
        <taxon>Mycobacterium</taxon>
        <taxon>Mycobacterium tuberculosis complex</taxon>
    </lineage>
</organism>
<accession>P9WNK9</accession>
<accession>L0TC41</accession>
<accession>O05834</accession>
<accession>P0A562</accession>
<gene>
    <name evidence="1 5" type="primary">era</name>
    <name type="ordered locus">Rv2364c</name>
    <name type="ORF">MTCY27.16</name>
</gene>